<evidence type="ECO:0000255" key="1">
    <source>
        <dbReference type="HAMAP-Rule" id="MF_00076"/>
    </source>
</evidence>
<sequence length="197" mass="21930">MAERKAYVERNTLETQIKASINLDGTGKARFDIGVPFLEHMLDQIARHGLIDLDIECKGDLAIDDHHTVEDVGITVGQAFSQAIGDKKGIRRYGHAYVPLDEALSRVVIDFSGRPGLQMHVPYTRATVGGFDVDLFQEFFQGFVNHANVTLHIDNLRGTNTHHQIETVFKAFGRALRMAVELDERMAGQMPSTKGVL</sequence>
<accession>Q4ZLP8</accession>
<name>HIS7_PSEU2</name>
<dbReference type="EC" id="4.2.1.19" evidence="1"/>
<dbReference type="EMBL" id="CP000075">
    <property type="protein sequence ID" value="AAY39924.1"/>
    <property type="molecule type" value="Genomic_DNA"/>
</dbReference>
<dbReference type="RefSeq" id="WP_002551454.1">
    <property type="nucleotide sequence ID" value="NC_007005.1"/>
</dbReference>
<dbReference type="RefSeq" id="YP_237962.1">
    <property type="nucleotide sequence ID" value="NC_007005.1"/>
</dbReference>
<dbReference type="SMR" id="Q4ZLP8"/>
<dbReference type="STRING" id="205918.Psyr_4897"/>
<dbReference type="GeneID" id="96221390"/>
<dbReference type="KEGG" id="psb:Psyr_4897"/>
<dbReference type="PATRIC" id="fig|205918.7.peg.5062"/>
<dbReference type="eggNOG" id="COG0131">
    <property type="taxonomic scope" value="Bacteria"/>
</dbReference>
<dbReference type="HOGENOM" id="CLU_044308_3_0_6"/>
<dbReference type="OrthoDB" id="9790411at2"/>
<dbReference type="UniPathway" id="UPA00031">
    <property type="reaction ID" value="UER00011"/>
</dbReference>
<dbReference type="Proteomes" id="UP000000426">
    <property type="component" value="Chromosome"/>
</dbReference>
<dbReference type="GO" id="GO:0005737">
    <property type="term" value="C:cytoplasm"/>
    <property type="evidence" value="ECO:0007669"/>
    <property type="project" value="UniProtKB-SubCell"/>
</dbReference>
<dbReference type="GO" id="GO:0004424">
    <property type="term" value="F:imidazoleglycerol-phosphate dehydratase activity"/>
    <property type="evidence" value="ECO:0007669"/>
    <property type="project" value="UniProtKB-UniRule"/>
</dbReference>
<dbReference type="GO" id="GO:0000105">
    <property type="term" value="P:L-histidine biosynthetic process"/>
    <property type="evidence" value="ECO:0007669"/>
    <property type="project" value="UniProtKB-UniRule"/>
</dbReference>
<dbReference type="CDD" id="cd07914">
    <property type="entry name" value="IGPD"/>
    <property type="match status" value="1"/>
</dbReference>
<dbReference type="FunFam" id="3.30.230.40:FF:000002">
    <property type="entry name" value="Imidazoleglycerol-phosphate dehydratase"/>
    <property type="match status" value="1"/>
</dbReference>
<dbReference type="FunFam" id="3.30.230.40:FF:000003">
    <property type="entry name" value="Imidazoleglycerol-phosphate dehydratase HisB"/>
    <property type="match status" value="1"/>
</dbReference>
<dbReference type="Gene3D" id="3.30.230.40">
    <property type="entry name" value="Imidazole glycerol phosphate dehydratase, domain 1"/>
    <property type="match status" value="2"/>
</dbReference>
<dbReference type="HAMAP" id="MF_00076">
    <property type="entry name" value="HisB"/>
    <property type="match status" value="1"/>
</dbReference>
<dbReference type="InterPro" id="IPR038494">
    <property type="entry name" value="IGPD_sf"/>
</dbReference>
<dbReference type="InterPro" id="IPR000807">
    <property type="entry name" value="ImidazoleglycerolP_deHydtase"/>
</dbReference>
<dbReference type="InterPro" id="IPR020565">
    <property type="entry name" value="ImidazoleglycerP_deHydtase_CS"/>
</dbReference>
<dbReference type="InterPro" id="IPR020568">
    <property type="entry name" value="Ribosomal_Su5_D2-typ_SF"/>
</dbReference>
<dbReference type="NCBIfam" id="NF002106">
    <property type="entry name" value="PRK00951.1-1"/>
    <property type="match status" value="1"/>
</dbReference>
<dbReference type="NCBIfam" id="NF002111">
    <property type="entry name" value="PRK00951.2-1"/>
    <property type="match status" value="1"/>
</dbReference>
<dbReference type="NCBIfam" id="NF002114">
    <property type="entry name" value="PRK00951.2-4"/>
    <property type="match status" value="1"/>
</dbReference>
<dbReference type="PANTHER" id="PTHR23133:SF2">
    <property type="entry name" value="IMIDAZOLEGLYCEROL-PHOSPHATE DEHYDRATASE"/>
    <property type="match status" value="1"/>
</dbReference>
<dbReference type="PANTHER" id="PTHR23133">
    <property type="entry name" value="IMIDAZOLEGLYCEROL-PHOSPHATE DEHYDRATASE HIS7"/>
    <property type="match status" value="1"/>
</dbReference>
<dbReference type="Pfam" id="PF00475">
    <property type="entry name" value="IGPD"/>
    <property type="match status" value="1"/>
</dbReference>
<dbReference type="SUPFAM" id="SSF54211">
    <property type="entry name" value="Ribosomal protein S5 domain 2-like"/>
    <property type="match status" value="2"/>
</dbReference>
<dbReference type="PROSITE" id="PS00954">
    <property type="entry name" value="IGP_DEHYDRATASE_1"/>
    <property type="match status" value="1"/>
</dbReference>
<dbReference type="PROSITE" id="PS00955">
    <property type="entry name" value="IGP_DEHYDRATASE_2"/>
    <property type="match status" value="1"/>
</dbReference>
<feature type="chain" id="PRO_1000010335" description="Imidazoleglycerol-phosphate dehydratase">
    <location>
        <begin position="1"/>
        <end position="197"/>
    </location>
</feature>
<keyword id="KW-0028">Amino-acid biosynthesis</keyword>
<keyword id="KW-0963">Cytoplasm</keyword>
<keyword id="KW-0368">Histidine biosynthesis</keyword>
<keyword id="KW-0456">Lyase</keyword>
<proteinExistence type="inferred from homology"/>
<protein>
    <recommendedName>
        <fullName evidence="1">Imidazoleglycerol-phosphate dehydratase</fullName>
        <shortName evidence="1">IGPD</shortName>
        <ecNumber evidence="1">4.2.1.19</ecNumber>
    </recommendedName>
</protein>
<reference key="1">
    <citation type="journal article" date="2005" name="Proc. Natl. Acad. Sci. U.S.A.">
        <title>Comparison of the complete genome sequences of Pseudomonas syringae pv. syringae B728a and pv. tomato DC3000.</title>
        <authorList>
            <person name="Feil H."/>
            <person name="Feil W.S."/>
            <person name="Chain P."/>
            <person name="Larimer F."/>
            <person name="Dibartolo G."/>
            <person name="Copeland A."/>
            <person name="Lykidis A."/>
            <person name="Trong S."/>
            <person name="Nolan M."/>
            <person name="Goltsman E."/>
            <person name="Thiel J."/>
            <person name="Malfatti S."/>
            <person name="Loper J.E."/>
            <person name="Lapidus A."/>
            <person name="Detter J.C."/>
            <person name="Land M."/>
            <person name="Richardson P.M."/>
            <person name="Kyrpides N.C."/>
            <person name="Ivanova N."/>
            <person name="Lindow S.E."/>
        </authorList>
    </citation>
    <scope>NUCLEOTIDE SEQUENCE [LARGE SCALE GENOMIC DNA]</scope>
    <source>
        <strain>B728a</strain>
    </source>
</reference>
<organism>
    <name type="scientific">Pseudomonas syringae pv. syringae (strain B728a)</name>
    <dbReference type="NCBI Taxonomy" id="205918"/>
    <lineage>
        <taxon>Bacteria</taxon>
        <taxon>Pseudomonadati</taxon>
        <taxon>Pseudomonadota</taxon>
        <taxon>Gammaproteobacteria</taxon>
        <taxon>Pseudomonadales</taxon>
        <taxon>Pseudomonadaceae</taxon>
        <taxon>Pseudomonas</taxon>
        <taxon>Pseudomonas syringae</taxon>
    </lineage>
</organism>
<gene>
    <name evidence="1" type="primary">hisB</name>
    <name type="ordered locus">Psyr_4897</name>
</gene>
<comment type="catalytic activity">
    <reaction evidence="1">
        <text>D-erythro-1-(imidazol-4-yl)glycerol 3-phosphate = 3-(imidazol-4-yl)-2-oxopropyl phosphate + H2O</text>
        <dbReference type="Rhea" id="RHEA:11040"/>
        <dbReference type="ChEBI" id="CHEBI:15377"/>
        <dbReference type="ChEBI" id="CHEBI:57766"/>
        <dbReference type="ChEBI" id="CHEBI:58278"/>
        <dbReference type="EC" id="4.2.1.19"/>
    </reaction>
</comment>
<comment type="pathway">
    <text evidence="1">Amino-acid biosynthesis; L-histidine biosynthesis; L-histidine from 5-phospho-alpha-D-ribose 1-diphosphate: step 6/9.</text>
</comment>
<comment type="subcellular location">
    <subcellularLocation>
        <location evidence="1">Cytoplasm</location>
    </subcellularLocation>
</comment>
<comment type="similarity">
    <text evidence="1">Belongs to the imidazoleglycerol-phosphate dehydratase family.</text>
</comment>